<sequence>MSQRSSQHIVGIHYAVGPKIGEGSFGVIFEGENILHSCQAQTGSKRDSSIIMANEPVAIKFEPRHSDAPQLRDEFRAYRILNGCVGIPHAYYFGQEGMHNILIIDLLGPSLEDLFEWCGRKFSVKTTCMVAKQMIDRVRAIHDHDLIYRDIKPDNFLISQYQRISPEGKVIKSCASSSNNDPNLIYMVDFGMAKQYRDPRTKQHIPYRERKSLSGTARYMSINTHFGREQSRRDDLESLGHVFFYFLRGSLPWQGLKAPNNKLKYEKIGMTKQKLNPDDLLLNNAIPYQFATYLKYARSLKFDEDPDYDYLISLMDDALRLNDLKDDGHYDWMDLNGGKGWNIKINRRANLHGYGNPNPRVNGNTARNNVNTNSKTRNTTPVATPKQQAQNSYNKDNSKSRISSNPQSFTKQQHVLKKIEPNSKYIPETHSNLQRPIKSQSQTYDSISHTQNSPFVPYSSSKANPKRSNNEHNLPNHYTNLANKNINYQSQRNYEQENDAYSDDENDTFCSKIYKYCCCCFCCC</sequence>
<reference key="1">
    <citation type="journal article" date="1996" name="Mol. Cell. Biol.">
        <title>Prenylated isoforms of yeast casein kinase I, including the novel Yck3p, suppress the gcs1 blockage of cell proliferation from stationary phase.</title>
        <authorList>
            <person name="Wang X."/>
            <person name="Hoekstra M.F."/>
            <person name="Demaggio A.J."/>
            <person name="Dhillon N."/>
            <person name="Vancura A."/>
            <person name="Kuret J."/>
            <person name="Johnston G.C."/>
            <person name="Singer R.A."/>
        </authorList>
    </citation>
    <scope>NUCLEOTIDE SEQUENCE [GENOMIC DNA]</scope>
</reference>
<reference key="2">
    <citation type="journal article" date="1997" name="Nature">
        <title>The nucleotide sequence of Saccharomyces cerevisiae chromosome V.</title>
        <authorList>
            <person name="Dietrich F.S."/>
            <person name="Mulligan J.T."/>
            <person name="Hennessy K.M."/>
            <person name="Yelton M.A."/>
            <person name="Allen E."/>
            <person name="Araujo R."/>
            <person name="Aviles E."/>
            <person name="Berno A."/>
            <person name="Brennan T."/>
            <person name="Carpenter J."/>
            <person name="Chen E."/>
            <person name="Cherry J.M."/>
            <person name="Chung E."/>
            <person name="Duncan M."/>
            <person name="Guzman E."/>
            <person name="Hartzell G."/>
            <person name="Hunicke-Smith S."/>
            <person name="Hyman R.W."/>
            <person name="Kayser A."/>
            <person name="Komp C."/>
            <person name="Lashkari D."/>
            <person name="Lew H."/>
            <person name="Lin D."/>
            <person name="Mosedale D."/>
            <person name="Nakahara K."/>
            <person name="Namath A."/>
            <person name="Norgren R."/>
            <person name="Oefner P."/>
            <person name="Oh C."/>
            <person name="Petel F.X."/>
            <person name="Roberts D."/>
            <person name="Sehl P."/>
            <person name="Schramm S."/>
            <person name="Shogren T."/>
            <person name="Smith V."/>
            <person name="Taylor P."/>
            <person name="Wei Y."/>
            <person name="Botstein D."/>
            <person name="Davis R.W."/>
        </authorList>
    </citation>
    <scope>NUCLEOTIDE SEQUENCE [LARGE SCALE GENOMIC DNA]</scope>
    <source>
        <strain>ATCC 204508 / S288c</strain>
    </source>
</reference>
<reference key="3">
    <citation type="journal article" date="2014" name="G3 (Bethesda)">
        <title>The reference genome sequence of Saccharomyces cerevisiae: Then and now.</title>
        <authorList>
            <person name="Engel S.R."/>
            <person name="Dietrich F.S."/>
            <person name="Fisk D.G."/>
            <person name="Binkley G."/>
            <person name="Balakrishnan R."/>
            <person name="Costanzo M.C."/>
            <person name="Dwight S.S."/>
            <person name="Hitz B.C."/>
            <person name="Karra K."/>
            <person name="Nash R.S."/>
            <person name="Weng S."/>
            <person name="Wong E.D."/>
            <person name="Lloyd P."/>
            <person name="Skrzypek M.S."/>
            <person name="Miyasato S.R."/>
            <person name="Simison M."/>
            <person name="Cherry J.M."/>
        </authorList>
    </citation>
    <scope>GENOME REANNOTATION</scope>
    <source>
        <strain>ATCC 204508 / S288c</strain>
    </source>
</reference>
<reference key="4">
    <citation type="journal article" date="2003" name="Nature">
        <title>Global analysis of protein expression in yeast.</title>
        <authorList>
            <person name="Ghaemmaghami S."/>
            <person name="Huh W.-K."/>
            <person name="Bower K."/>
            <person name="Howson R.W."/>
            <person name="Belle A."/>
            <person name="Dephoure N."/>
            <person name="O'Shea E.K."/>
            <person name="Weissman J.S."/>
        </authorList>
    </citation>
    <scope>LEVEL OF PROTEIN EXPRESSION [LARGE SCALE ANALYSIS]</scope>
</reference>
<reference key="5">
    <citation type="journal article" date="2004" name="Mol. Biol. Cell">
        <title>The yeast casein kinase Yck3p is palmitoylated, then sorted to the vacuolar membrane with AP-3-dependent recognition of a YXXPhi adaptin sorting signal.</title>
        <authorList>
            <person name="Sun B."/>
            <person name="Chen L."/>
            <person name="Cao W."/>
            <person name="Roth A.F."/>
            <person name="Davis N.G."/>
        </authorList>
    </citation>
    <scope>PALMITOYLATION AT CYS-517; CYS-518; CYS-519; CYS-520; CYS-522; CYS-523 AND CYS-524</scope>
    <scope>TARGETING SIGNAL</scope>
    <scope>MUTAGENESIS OF TYR-444; SER-446 AND ILE-447</scope>
</reference>
<reference key="6">
    <citation type="journal article" date="2007" name="Proc. Natl. Acad. Sci. U.S.A.">
        <title>Analysis of phosphorylation sites on proteins from Saccharomyces cerevisiae by electron transfer dissociation (ETD) mass spectrometry.</title>
        <authorList>
            <person name="Chi A."/>
            <person name="Huttenhower C."/>
            <person name="Geer L.Y."/>
            <person name="Coon J.J."/>
            <person name="Syka J.E.P."/>
            <person name="Bai D.L."/>
            <person name="Shabanowitz J."/>
            <person name="Burke D.J."/>
            <person name="Troyanskaya O.G."/>
            <person name="Hunt D.F."/>
        </authorList>
    </citation>
    <scope>IDENTIFICATION BY MASS SPECTROMETRY [LARGE SCALE ANALYSIS]</scope>
</reference>
<reference key="7">
    <citation type="journal article" date="2009" name="Science">
        <title>Global analysis of Cdk1 substrate phosphorylation sites provides insights into evolution.</title>
        <authorList>
            <person name="Holt L.J."/>
            <person name="Tuch B.B."/>
            <person name="Villen J."/>
            <person name="Johnson A.D."/>
            <person name="Gygi S.P."/>
            <person name="Morgan D.O."/>
        </authorList>
    </citation>
    <scope>IDENTIFICATION BY MASS SPECTROMETRY [LARGE SCALE ANALYSIS]</scope>
</reference>
<reference key="8">
    <citation type="journal article" date="2020" name="Elife">
        <title>A conserved and regulated mechanism drives endosomal Rab transition.</title>
        <authorList>
            <person name="Langemeyer L."/>
            <person name="Borchers A.C."/>
            <person name="Herrmann E."/>
            <person name="Fuellbrunn N."/>
            <person name="Han Y."/>
            <person name="Perz A."/>
            <person name="Auffarth K."/>
            <person name="Kuemmel D."/>
            <person name="Ungermann C."/>
        </authorList>
    </citation>
    <scope>FUNCTION</scope>
</reference>
<organism>
    <name type="scientific">Saccharomyces cerevisiae (strain ATCC 204508 / S288c)</name>
    <name type="common">Baker's yeast</name>
    <dbReference type="NCBI Taxonomy" id="559292"/>
    <lineage>
        <taxon>Eukaryota</taxon>
        <taxon>Fungi</taxon>
        <taxon>Dikarya</taxon>
        <taxon>Ascomycota</taxon>
        <taxon>Saccharomycotina</taxon>
        <taxon>Saccharomycetes</taxon>
        <taxon>Saccharomycetales</taxon>
        <taxon>Saccharomycetaceae</taxon>
        <taxon>Saccharomyces</taxon>
    </lineage>
</organism>
<accession>P39962</accession>
<accession>D3DM29</accession>
<comment type="function">
    <text evidence="6">Casein kinases are operationally defined by their preferential utilization of acidic proteins such as caseins as substrates. Phosphorylates MON1, inhibiting the guanine nucleotide exchange factor activity of the MON1-CCZ1 complex, possibly by preventing its recruitment to membranes by small GTPase RAB5 homologs (PubMed:32391792).</text>
</comment>
<comment type="catalytic activity">
    <reaction>
        <text>L-seryl-[protein] + ATP = O-phospho-L-seryl-[protein] + ADP + H(+)</text>
        <dbReference type="Rhea" id="RHEA:17989"/>
        <dbReference type="Rhea" id="RHEA-COMP:9863"/>
        <dbReference type="Rhea" id="RHEA-COMP:11604"/>
        <dbReference type="ChEBI" id="CHEBI:15378"/>
        <dbReference type="ChEBI" id="CHEBI:29999"/>
        <dbReference type="ChEBI" id="CHEBI:30616"/>
        <dbReference type="ChEBI" id="CHEBI:83421"/>
        <dbReference type="ChEBI" id="CHEBI:456216"/>
        <dbReference type="EC" id="2.7.11.1"/>
    </reaction>
</comment>
<comment type="catalytic activity">
    <reaction>
        <text>L-threonyl-[protein] + ATP = O-phospho-L-threonyl-[protein] + ADP + H(+)</text>
        <dbReference type="Rhea" id="RHEA:46608"/>
        <dbReference type="Rhea" id="RHEA-COMP:11060"/>
        <dbReference type="Rhea" id="RHEA-COMP:11605"/>
        <dbReference type="ChEBI" id="CHEBI:15378"/>
        <dbReference type="ChEBI" id="CHEBI:30013"/>
        <dbReference type="ChEBI" id="CHEBI:30616"/>
        <dbReference type="ChEBI" id="CHEBI:61977"/>
        <dbReference type="ChEBI" id="CHEBI:456216"/>
        <dbReference type="EC" id="2.7.11.1"/>
    </reaction>
</comment>
<comment type="subcellular location">
    <subcellularLocation>
        <location>Cell membrane</location>
        <topology>Lipid-anchor</topology>
        <orientation>Cytoplasmic side</orientation>
    </subcellularLocation>
    <subcellularLocation>
        <location>Nucleus membrane</location>
        <topology>Lipid-anchor</topology>
        <orientation>Cytoplasmic side</orientation>
    </subcellularLocation>
    <subcellularLocation>
        <location>Vacuole membrane</location>
        <topology>Lipid-anchor</topology>
        <orientation>Cytoplasmic side</orientation>
    </subcellularLocation>
    <text>Targeting to the vacuolar membrane may depend on AP-3 pathway.</text>
</comment>
<comment type="domain">
    <text>The YXXZ (Tyr-Xaa-Xaa-Zaa, where Zaa is a hydrophobic residue) motif mediates the targeting to the lysosomal compartments.</text>
</comment>
<comment type="miscellaneous">
    <text evidence="4">Present with 1320 molecules/cell in log phase SD medium.</text>
</comment>
<comment type="similarity">
    <text evidence="7">Belongs to the protein kinase superfamily. CK1 Ser/Thr protein kinase family. Casein kinase I subfamily.</text>
</comment>
<evidence type="ECO:0000255" key="1">
    <source>
        <dbReference type="PROSITE-ProRule" id="PRU00159"/>
    </source>
</evidence>
<evidence type="ECO:0000255" key="2">
    <source>
        <dbReference type="PROSITE-ProRule" id="PRU10027"/>
    </source>
</evidence>
<evidence type="ECO:0000256" key="3">
    <source>
        <dbReference type="SAM" id="MobiDB-lite"/>
    </source>
</evidence>
<evidence type="ECO:0000269" key="4">
    <source>
    </source>
</evidence>
<evidence type="ECO:0000269" key="5">
    <source>
    </source>
</evidence>
<evidence type="ECO:0000269" key="6">
    <source>
    </source>
</evidence>
<evidence type="ECO:0000305" key="7"/>
<evidence type="ECO:0000305" key="8">
    <source>
    </source>
</evidence>
<gene>
    <name type="primary">YCK3</name>
    <name type="synonym">CKI3</name>
    <name type="ordered locus">YER123W</name>
</gene>
<feature type="chain" id="PRO_0000192858" description="Casein kinase I homolog 3">
    <location>
        <begin position="1"/>
        <end position="524"/>
    </location>
</feature>
<feature type="domain" description="Protein kinase" evidence="1">
    <location>
        <begin position="14"/>
        <end position="319"/>
    </location>
</feature>
<feature type="region of interest" description="Disordered" evidence="3">
    <location>
        <begin position="352"/>
        <end position="414"/>
    </location>
</feature>
<feature type="region of interest" description="Disordered" evidence="3">
    <location>
        <begin position="427"/>
        <end position="474"/>
    </location>
</feature>
<feature type="short sequence motif" description="YXXZ targeting signal">
    <location>
        <begin position="444"/>
        <end position="447"/>
    </location>
</feature>
<feature type="compositionally biased region" description="Low complexity" evidence="3">
    <location>
        <begin position="360"/>
        <end position="373"/>
    </location>
</feature>
<feature type="compositionally biased region" description="Polar residues" evidence="3">
    <location>
        <begin position="374"/>
        <end position="413"/>
    </location>
</feature>
<feature type="compositionally biased region" description="Polar residues" evidence="3">
    <location>
        <begin position="429"/>
        <end position="474"/>
    </location>
</feature>
<feature type="active site" description="Proton acceptor" evidence="1 2">
    <location>
        <position position="150"/>
    </location>
</feature>
<feature type="binding site" evidence="1">
    <location>
        <begin position="20"/>
        <end position="28"/>
    </location>
    <ligand>
        <name>ATP</name>
        <dbReference type="ChEBI" id="CHEBI:30616"/>
    </ligand>
</feature>
<feature type="binding site" evidence="1">
    <location>
        <position position="60"/>
    </location>
    <ligand>
        <name>ATP</name>
        <dbReference type="ChEBI" id="CHEBI:30616"/>
    </ligand>
</feature>
<feature type="lipid moiety-binding region" description="S-palmitoyl cysteine" evidence="8">
    <location>
        <position position="517"/>
    </location>
</feature>
<feature type="lipid moiety-binding region" description="S-palmitoyl cysteine" evidence="8">
    <location>
        <position position="518"/>
    </location>
</feature>
<feature type="lipid moiety-binding region" description="S-palmitoyl cysteine" evidence="8">
    <location>
        <position position="519"/>
    </location>
</feature>
<feature type="lipid moiety-binding region" description="S-palmitoyl cysteine" evidence="8">
    <location>
        <position position="520"/>
    </location>
</feature>
<feature type="lipid moiety-binding region" description="S-palmitoyl cysteine" evidence="8">
    <location>
        <position position="522"/>
    </location>
</feature>
<feature type="lipid moiety-binding region" description="S-palmitoyl cysteine" evidence="8">
    <location>
        <position position="523"/>
    </location>
</feature>
<feature type="lipid moiety-binding region" description="S-palmitoyl cysteine" evidence="8">
    <location>
        <position position="524"/>
    </location>
</feature>
<feature type="mutagenesis site" description="Impaired vacuolar targeting." evidence="5">
    <original>Y</original>
    <variation>H</variation>
    <location>
        <position position="444"/>
    </location>
</feature>
<feature type="mutagenesis site" description="Impaired vacuolar targeting." evidence="5">
    <original>S</original>
    <variation>P</variation>
    <location>
        <position position="446"/>
    </location>
</feature>
<feature type="mutagenesis site" description="Impaired vacuolar targeting." evidence="5">
    <original>I</original>
    <variation>N</variation>
    <location>
        <position position="447"/>
    </location>
</feature>
<name>KC13_YEAST</name>
<protein>
    <recommendedName>
        <fullName>Casein kinase I homolog 3</fullName>
        <ecNumber>2.7.11.1</ecNumber>
    </recommendedName>
</protein>
<dbReference type="EC" id="2.7.11.1"/>
<dbReference type="EMBL" id="X87108">
    <property type="protein sequence ID" value="CAA60589.1"/>
    <property type="molecule type" value="Genomic_DNA"/>
</dbReference>
<dbReference type="EMBL" id="U18916">
    <property type="protein sequence ID" value="AAC03221.2"/>
    <property type="molecule type" value="Genomic_DNA"/>
</dbReference>
<dbReference type="EMBL" id="BK006939">
    <property type="protein sequence ID" value="DAA07783.1"/>
    <property type="molecule type" value="Genomic_DNA"/>
</dbReference>
<dbReference type="PIR" id="S50626">
    <property type="entry name" value="S50626"/>
</dbReference>
<dbReference type="RefSeq" id="NP_011049.2">
    <property type="nucleotide sequence ID" value="NM_001179013.1"/>
</dbReference>
<dbReference type="SMR" id="P39962"/>
<dbReference type="BioGRID" id="36867">
    <property type="interactions" value="206"/>
</dbReference>
<dbReference type="DIP" id="DIP-6331N"/>
<dbReference type="FunCoup" id="P39962">
    <property type="interactions" value="751"/>
</dbReference>
<dbReference type="IntAct" id="P39962">
    <property type="interactions" value="30"/>
</dbReference>
<dbReference type="MINT" id="P39962"/>
<dbReference type="STRING" id="4932.YER123W"/>
<dbReference type="GlyGen" id="P39962">
    <property type="glycosylation" value="3 sites, 1 O-linked glycan (3 sites)"/>
</dbReference>
<dbReference type="iPTMnet" id="P39962"/>
<dbReference type="SwissPalm" id="P39962"/>
<dbReference type="PaxDb" id="4932-YER123W"/>
<dbReference type="PeptideAtlas" id="P39962"/>
<dbReference type="TopDownProteomics" id="P39962"/>
<dbReference type="EnsemblFungi" id="YER123W_mRNA">
    <property type="protein sequence ID" value="YER123W"/>
    <property type="gene ID" value="YER123W"/>
</dbReference>
<dbReference type="GeneID" id="856860"/>
<dbReference type="KEGG" id="sce:YER123W"/>
<dbReference type="AGR" id="SGD:S000000925"/>
<dbReference type="SGD" id="S000000925">
    <property type="gene designation" value="YCK3"/>
</dbReference>
<dbReference type="VEuPathDB" id="FungiDB:YER123W"/>
<dbReference type="eggNOG" id="KOG1165">
    <property type="taxonomic scope" value="Eukaryota"/>
</dbReference>
<dbReference type="GeneTree" id="ENSGT00940000176388"/>
<dbReference type="HOGENOM" id="CLU_019279_1_0_1"/>
<dbReference type="InParanoid" id="P39962"/>
<dbReference type="OMA" id="FEWCGRK"/>
<dbReference type="OrthoDB" id="5800476at2759"/>
<dbReference type="BioCyc" id="YEAST:YER123W-MONOMER"/>
<dbReference type="BRENDA" id="2.7.11.1">
    <property type="organism ID" value="984"/>
</dbReference>
<dbReference type="BioGRID-ORCS" id="856860">
    <property type="hits" value="2 hits in 13 CRISPR screens"/>
</dbReference>
<dbReference type="PRO" id="PR:P39962"/>
<dbReference type="Proteomes" id="UP000002311">
    <property type="component" value="Chromosome V"/>
</dbReference>
<dbReference type="RNAct" id="P39962">
    <property type="molecule type" value="protein"/>
</dbReference>
<dbReference type="GO" id="GO:0005737">
    <property type="term" value="C:cytoplasm"/>
    <property type="evidence" value="ECO:0000318"/>
    <property type="project" value="GO_Central"/>
</dbReference>
<dbReference type="GO" id="GO:0000324">
    <property type="term" value="C:fungal-type vacuole"/>
    <property type="evidence" value="ECO:0000314"/>
    <property type="project" value="SGD"/>
</dbReference>
<dbReference type="GO" id="GO:0000329">
    <property type="term" value="C:fungal-type vacuole membrane"/>
    <property type="evidence" value="ECO:0000314"/>
    <property type="project" value="SGD"/>
</dbReference>
<dbReference type="GO" id="GO:0031965">
    <property type="term" value="C:nuclear membrane"/>
    <property type="evidence" value="ECO:0007669"/>
    <property type="project" value="UniProtKB-SubCell"/>
</dbReference>
<dbReference type="GO" id="GO:0005634">
    <property type="term" value="C:nucleus"/>
    <property type="evidence" value="ECO:0000314"/>
    <property type="project" value="SGD"/>
</dbReference>
<dbReference type="GO" id="GO:0005886">
    <property type="term" value="C:plasma membrane"/>
    <property type="evidence" value="ECO:0000314"/>
    <property type="project" value="SGD"/>
</dbReference>
<dbReference type="GO" id="GO:0005524">
    <property type="term" value="F:ATP binding"/>
    <property type="evidence" value="ECO:0007669"/>
    <property type="project" value="UniProtKB-KW"/>
</dbReference>
<dbReference type="GO" id="GO:0004672">
    <property type="term" value="F:protein kinase activity"/>
    <property type="evidence" value="ECO:0007005"/>
    <property type="project" value="SGD"/>
</dbReference>
<dbReference type="GO" id="GO:0106310">
    <property type="term" value="F:protein serine kinase activity"/>
    <property type="evidence" value="ECO:0007669"/>
    <property type="project" value="RHEA"/>
</dbReference>
<dbReference type="GO" id="GO:0004674">
    <property type="term" value="F:protein serine/threonine kinase activity"/>
    <property type="evidence" value="ECO:0000250"/>
    <property type="project" value="SGD"/>
</dbReference>
<dbReference type="GO" id="GO:0006897">
    <property type="term" value="P:endocytosis"/>
    <property type="evidence" value="ECO:0000318"/>
    <property type="project" value="GO_Central"/>
</dbReference>
<dbReference type="GO" id="GO:0007165">
    <property type="term" value="P:signal transduction"/>
    <property type="evidence" value="ECO:0000318"/>
    <property type="project" value="GO_Central"/>
</dbReference>
<dbReference type="GO" id="GO:0016192">
    <property type="term" value="P:vesicle-mediated transport"/>
    <property type="evidence" value="ECO:0000315"/>
    <property type="project" value="SGD"/>
</dbReference>
<dbReference type="FunFam" id="1.10.510.10:FF:000160">
    <property type="entry name" value="Casein kinase I 1"/>
    <property type="match status" value="1"/>
</dbReference>
<dbReference type="Gene3D" id="1.10.510.10">
    <property type="entry name" value="Transferase(Phosphotransferase) domain 1"/>
    <property type="match status" value="1"/>
</dbReference>
<dbReference type="InterPro" id="IPR050235">
    <property type="entry name" value="CK1_Ser-Thr_kinase"/>
</dbReference>
<dbReference type="InterPro" id="IPR011009">
    <property type="entry name" value="Kinase-like_dom_sf"/>
</dbReference>
<dbReference type="InterPro" id="IPR000719">
    <property type="entry name" value="Prot_kinase_dom"/>
</dbReference>
<dbReference type="InterPro" id="IPR008271">
    <property type="entry name" value="Ser/Thr_kinase_AS"/>
</dbReference>
<dbReference type="PANTHER" id="PTHR11909">
    <property type="entry name" value="CASEIN KINASE-RELATED"/>
    <property type="match status" value="1"/>
</dbReference>
<dbReference type="Pfam" id="PF00069">
    <property type="entry name" value="Pkinase"/>
    <property type="match status" value="1"/>
</dbReference>
<dbReference type="SMART" id="SM00220">
    <property type="entry name" value="S_TKc"/>
    <property type="match status" value="1"/>
</dbReference>
<dbReference type="SUPFAM" id="SSF56112">
    <property type="entry name" value="Protein kinase-like (PK-like)"/>
    <property type="match status" value="1"/>
</dbReference>
<dbReference type="PROSITE" id="PS50011">
    <property type="entry name" value="PROTEIN_KINASE_DOM"/>
    <property type="match status" value="1"/>
</dbReference>
<dbReference type="PROSITE" id="PS00108">
    <property type="entry name" value="PROTEIN_KINASE_ST"/>
    <property type="match status" value="1"/>
</dbReference>
<proteinExistence type="evidence at protein level"/>
<keyword id="KW-0067">ATP-binding</keyword>
<keyword id="KW-1003">Cell membrane</keyword>
<keyword id="KW-0418">Kinase</keyword>
<keyword id="KW-0449">Lipoprotein</keyword>
<keyword id="KW-0472">Membrane</keyword>
<keyword id="KW-0547">Nucleotide-binding</keyword>
<keyword id="KW-0539">Nucleus</keyword>
<keyword id="KW-0564">Palmitate</keyword>
<keyword id="KW-1185">Reference proteome</keyword>
<keyword id="KW-0723">Serine/threonine-protein kinase</keyword>
<keyword id="KW-0808">Transferase</keyword>
<keyword id="KW-0926">Vacuole</keyword>